<keyword id="KW-1185">Reference proteome</keyword>
<keyword id="KW-0687">Ribonucleoprotein</keyword>
<keyword id="KW-0689">Ribosomal protein</keyword>
<keyword id="KW-0694">RNA-binding</keyword>
<keyword id="KW-0699">rRNA-binding</keyword>
<keyword id="KW-0820">tRNA-binding</keyword>
<name>RL5_METMP</name>
<gene>
    <name evidence="1" type="primary">rpl5</name>
    <name type="synonym">rplE</name>
    <name type="ordered locus">MMP1412</name>
</gene>
<proteinExistence type="inferred from homology"/>
<reference key="1">
    <citation type="journal article" date="2004" name="J. Bacteriol.">
        <title>Complete genome sequence of the genetically tractable hydrogenotrophic methanogen Methanococcus maripaludis.</title>
        <authorList>
            <person name="Hendrickson E.L."/>
            <person name="Kaul R."/>
            <person name="Zhou Y."/>
            <person name="Bovee D."/>
            <person name="Chapman P."/>
            <person name="Chung J."/>
            <person name="Conway de Macario E."/>
            <person name="Dodsworth J.A."/>
            <person name="Gillett W."/>
            <person name="Graham D.E."/>
            <person name="Hackett M."/>
            <person name="Haydock A.K."/>
            <person name="Kang A."/>
            <person name="Land M.L."/>
            <person name="Levy R."/>
            <person name="Lie T.J."/>
            <person name="Major T.A."/>
            <person name="Moore B.C."/>
            <person name="Porat I."/>
            <person name="Palmeiri A."/>
            <person name="Rouse G."/>
            <person name="Saenphimmachak C."/>
            <person name="Soell D."/>
            <person name="Van Dien S."/>
            <person name="Wang T."/>
            <person name="Whitman W.B."/>
            <person name="Xia Q."/>
            <person name="Zhang Y."/>
            <person name="Larimer F.W."/>
            <person name="Olson M.V."/>
            <person name="Leigh J.A."/>
        </authorList>
    </citation>
    <scope>NUCLEOTIDE SEQUENCE [LARGE SCALE GENOMIC DNA]</scope>
    <source>
        <strain>DSM 14266 / JCM 13030 / NBRC 101832 / S2 / LL</strain>
    </source>
</reference>
<sequence>MSFQEVWEKEPMKKPRIQKVTVNFGVGEAGDRLTIGAKVIEELTGQSPVRTLAKQTNPAFGIRKKLPIGLKVTLRGKKAEEFLKNAFTAFKACGKTLFASSFDQVGNFSFGVPEHIDFPGQKYDPSVGIYGMDICVTFEKSGYRVKSRKVKRSHIPEKHLVTKDEAIEYIQAKFDTEVVRE</sequence>
<comment type="function">
    <text evidence="1">This is one of the proteins that bind and probably mediate the attachment of the 5S RNA into the large ribosomal subunit, where it forms part of the central protuberance. In the 70S ribosome it contacts protein S13 of the 30S subunit (bridge B1b), connecting the 2 subunits; this bridge is implicated in subunit movement. May contact the P site tRNA; the 5S rRNA and some of its associated proteins might help stabilize positioning of ribosome-bound tRNAs.</text>
</comment>
<comment type="subunit">
    <text evidence="1">Part of the 50S ribosomal subunit; contacts the 5S rRNA and probably tRNA. Forms a bridge to the 30S subunit in the 70S ribosome.</text>
</comment>
<comment type="similarity">
    <text evidence="1">Belongs to the universal ribosomal protein uL5 family.</text>
</comment>
<dbReference type="EMBL" id="BX950229">
    <property type="protein sequence ID" value="CAF30968.1"/>
    <property type="molecule type" value="Genomic_DNA"/>
</dbReference>
<dbReference type="RefSeq" id="WP_011171356.1">
    <property type="nucleotide sequence ID" value="NC_005791.1"/>
</dbReference>
<dbReference type="SMR" id="Q6LXE0"/>
<dbReference type="STRING" id="267377.MMP1412"/>
<dbReference type="EnsemblBacteria" id="CAF30968">
    <property type="protein sequence ID" value="CAF30968"/>
    <property type="gene ID" value="MMP1412"/>
</dbReference>
<dbReference type="GeneID" id="10982986"/>
<dbReference type="KEGG" id="mmp:MMP1412"/>
<dbReference type="PATRIC" id="fig|267377.15.peg.1448"/>
<dbReference type="eggNOG" id="arCOG04092">
    <property type="taxonomic scope" value="Archaea"/>
</dbReference>
<dbReference type="HOGENOM" id="CLU_061015_3_0_2"/>
<dbReference type="OrthoDB" id="372044at2157"/>
<dbReference type="Proteomes" id="UP000000590">
    <property type="component" value="Chromosome"/>
</dbReference>
<dbReference type="GO" id="GO:1990904">
    <property type="term" value="C:ribonucleoprotein complex"/>
    <property type="evidence" value="ECO:0007669"/>
    <property type="project" value="UniProtKB-KW"/>
</dbReference>
<dbReference type="GO" id="GO:0005840">
    <property type="term" value="C:ribosome"/>
    <property type="evidence" value="ECO:0007669"/>
    <property type="project" value="UniProtKB-KW"/>
</dbReference>
<dbReference type="GO" id="GO:0019843">
    <property type="term" value="F:rRNA binding"/>
    <property type="evidence" value="ECO:0007669"/>
    <property type="project" value="UniProtKB-UniRule"/>
</dbReference>
<dbReference type="GO" id="GO:0003735">
    <property type="term" value="F:structural constituent of ribosome"/>
    <property type="evidence" value="ECO:0007669"/>
    <property type="project" value="InterPro"/>
</dbReference>
<dbReference type="GO" id="GO:0000049">
    <property type="term" value="F:tRNA binding"/>
    <property type="evidence" value="ECO:0007669"/>
    <property type="project" value="UniProtKB-UniRule"/>
</dbReference>
<dbReference type="GO" id="GO:0006412">
    <property type="term" value="P:translation"/>
    <property type="evidence" value="ECO:0007669"/>
    <property type="project" value="UniProtKB-UniRule"/>
</dbReference>
<dbReference type="FunFam" id="3.30.1440.10:FF:000002">
    <property type="entry name" value="60S ribosomal protein L11"/>
    <property type="match status" value="1"/>
</dbReference>
<dbReference type="Gene3D" id="3.30.1440.10">
    <property type="match status" value="1"/>
</dbReference>
<dbReference type="HAMAP" id="MF_01333_A">
    <property type="entry name" value="Ribosomal_uL5_A"/>
    <property type="match status" value="1"/>
</dbReference>
<dbReference type="InterPro" id="IPR002132">
    <property type="entry name" value="Ribosomal_uL5"/>
</dbReference>
<dbReference type="InterPro" id="IPR022804">
    <property type="entry name" value="Ribosomal_uL5_arc"/>
</dbReference>
<dbReference type="InterPro" id="IPR031309">
    <property type="entry name" value="Ribosomal_uL5_C"/>
</dbReference>
<dbReference type="InterPro" id="IPR020929">
    <property type="entry name" value="Ribosomal_uL5_CS"/>
</dbReference>
<dbReference type="InterPro" id="IPR022803">
    <property type="entry name" value="Ribosomal_uL5_dom_sf"/>
</dbReference>
<dbReference type="InterPro" id="IPR031310">
    <property type="entry name" value="Ribosomal_uL5_N"/>
</dbReference>
<dbReference type="NCBIfam" id="NF003258">
    <property type="entry name" value="PRK04219.1"/>
    <property type="match status" value="1"/>
</dbReference>
<dbReference type="PANTHER" id="PTHR11994">
    <property type="entry name" value="60S RIBOSOMAL PROTEIN L11-RELATED"/>
    <property type="match status" value="1"/>
</dbReference>
<dbReference type="Pfam" id="PF00281">
    <property type="entry name" value="Ribosomal_L5"/>
    <property type="match status" value="1"/>
</dbReference>
<dbReference type="Pfam" id="PF00673">
    <property type="entry name" value="Ribosomal_L5_C"/>
    <property type="match status" value="1"/>
</dbReference>
<dbReference type="PIRSF" id="PIRSF002161">
    <property type="entry name" value="Ribosomal_L5"/>
    <property type="match status" value="1"/>
</dbReference>
<dbReference type="SUPFAM" id="SSF55282">
    <property type="entry name" value="RL5-like"/>
    <property type="match status" value="1"/>
</dbReference>
<dbReference type="PROSITE" id="PS00358">
    <property type="entry name" value="RIBOSOMAL_L5"/>
    <property type="match status" value="1"/>
</dbReference>
<feature type="chain" id="PRO_0000125059" description="Large ribosomal subunit protein uL5">
    <location>
        <begin position="1"/>
        <end position="181"/>
    </location>
</feature>
<protein>
    <recommendedName>
        <fullName evidence="1">Large ribosomal subunit protein uL5</fullName>
    </recommendedName>
    <alternativeName>
        <fullName evidence="2">50S ribosomal protein L5</fullName>
    </alternativeName>
</protein>
<organism>
    <name type="scientific">Methanococcus maripaludis (strain DSM 14266 / JCM 13030 / NBRC 101832 / S2 / LL)</name>
    <dbReference type="NCBI Taxonomy" id="267377"/>
    <lineage>
        <taxon>Archaea</taxon>
        <taxon>Methanobacteriati</taxon>
        <taxon>Methanobacteriota</taxon>
        <taxon>Methanomada group</taxon>
        <taxon>Methanococci</taxon>
        <taxon>Methanococcales</taxon>
        <taxon>Methanococcaceae</taxon>
        <taxon>Methanococcus</taxon>
    </lineage>
</organism>
<evidence type="ECO:0000255" key="1">
    <source>
        <dbReference type="HAMAP-Rule" id="MF_01333"/>
    </source>
</evidence>
<evidence type="ECO:0000305" key="2"/>
<accession>Q6LXE0</accession>